<comment type="function">
    <text evidence="1">Allows the formation of correctly charged Asn-tRNA(Asn) or Gln-tRNA(Gln) through the transamidation of misacylated Asp-tRNA(Asn) or Glu-tRNA(Gln) in organisms which lack either or both of asparaginyl-tRNA or glutaminyl-tRNA synthetases. The reaction takes place in the presence of glutamine and ATP through an activated phospho-Asp-tRNA(Asn) or phospho-Glu-tRNA(Gln).</text>
</comment>
<comment type="catalytic activity">
    <reaction evidence="1">
        <text>L-glutamyl-tRNA(Gln) + L-glutamine + ATP + H2O = L-glutaminyl-tRNA(Gln) + L-glutamate + ADP + phosphate + H(+)</text>
        <dbReference type="Rhea" id="RHEA:17521"/>
        <dbReference type="Rhea" id="RHEA-COMP:9681"/>
        <dbReference type="Rhea" id="RHEA-COMP:9684"/>
        <dbReference type="ChEBI" id="CHEBI:15377"/>
        <dbReference type="ChEBI" id="CHEBI:15378"/>
        <dbReference type="ChEBI" id="CHEBI:29985"/>
        <dbReference type="ChEBI" id="CHEBI:30616"/>
        <dbReference type="ChEBI" id="CHEBI:43474"/>
        <dbReference type="ChEBI" id="CHEBI:58359"/>
        <dbReference type="ChEBI" id="CHEBI:78520"/>
        <dbReference type="ChEBI" id="CHEBI:78521"/>
        <dbReference type="ChEBI" id="CHEBI:456216"/>
    </reaction>
</comment>
<comment type="catalytic activity">
    <reaction evidence="1">
        <text>L-aspartyl-tRNA(Asn) + L-glutamine + ATP + H2O = L-asparaginyl-tRNA(Asn) + L-glutamate + ADP + phosphate + 2 H(+)</text>
        <dbReference type="Rhea" id="RHEA:14513"/>
        <dbReference type="Rhea" id="RHEA-COMP:9674"/>
        <dbReference type="Rhea" id="RHEA-COMP:9677"/>
        <dbReference type="ChEBI" id="CHEBI:15377"/>
        <dbReference type="ChEBI" id="CHEBI:15378"/>
        <dbReference type="ChEBI" id="CHEBI:29985"/>
        <dbReference type="ChEBI" id="CHEBI:30616"/>
        <dbReference type="ChEBI" id="CHEBI:43474"/>
        <dbReference type="ChEBI" id="CHEBI:58359"/>
        <dbReference type="ChEBI" id="CHEBI:78515"/>
        <dbReference type="ChEBI" id="CHEBI:78516"/>
        <dbReference type="ChEBI" id="CHEBI:456216"/>
    </reaction>
</comment>
<comment type="subunit">
    <text evidence="1">Heterotrimer of A, B and C subunits.</text>
</comment>
<comment type="similarity">
    <text evidence="1">Belongs to the GatB/GatE family. GatB subfamily.</text>
</comment>
<accession>B6IZ24</accession>
<sequence length="477" mass="53454">MEWEPVIGLEVHVQLRTQSKIFSGAATAYGAEPNTQACAIDLGLPGVLPVLNKEAVKLAVCFGLSVNASIPPYSIFARKNYFYPDLPKGYQISQYNFPIVQNGHLDIENEDGTTKRIGITRAHLEEDAGKSFHEGMQGYSGIDFNRAGTPLLEIVSEPDIRSAQEAVAYLKALHSLVRYIGVSDANMQEGAFRCDVNISLRPKGEEKFGTRAEIKNVNSFRFVERAILFEINRQKEILENGGTIVQETRLYDAVQDETRSMRTKEEAHDYRYFPDPDLLPVEIGPEFIEAVKNQLPELPWEKRKRFAASYQLSNYDVKLLTTQIEIANYFETVLKIDKTIPPKLAANWINGDLAAALNKNNLSITQSPINAEQLASLLHRIADNTLSGSMGKQVFETMWGGEGDADTIIERHGLKQITDTEALEKIIDEVIENNPTQVEQYRSGKDKLIAFFVGQVMKATKGKANPQQVNELFKKKL</sequence>
<proteinExistence type="inferred from homology"/>
<evidence type="ECO:0000255" key="1">
    <source>
        <dbReference type="HAMAP-Rule" id="MF_00121"/>
    </source>
</evidence>
<gene>
    <name evidence="1" type="primary">gatB</name>
    <name type="ordered locus">CbuG_0533</name>
</gene>
<protein>
    <recommendedName>
        <fullName evidence="1">Aspartyl/glutamyl-tRNA(Asn/Gln) amidotransferase subunit B</fullName>
        <shortName evidence="1">Asp/Glu-ADT subunit B</shortName>
        <ecNumber evidence="1">6.3.5.-</ecNumber>
    </recommendedName>
</protein>
<name>GATB_COXB2</name>
<feature type="chain" id="PRO_1000095207" description="Aspartyl/glutamyl-tRNA(Asn/Gln) amidotransferase subunit B">
    <location>
        <begin position="1"/>
        <end position="477"/>
    </location>
</feature>
<dbReference type="EC" id="6.3.5.-" evidence="1"/>
<dbReference type="EMBL" id="CP001019">
    <property type="protein sequence ID" value="ACJ17952.1"/>
    <property type="molecule type" value="Genomic_DNA"/>
</dbReference>
<dbReference type="RefSeq" id="WP_012569810.1">
    <property type="nucleotide sequence ID" value="NC_011527.1"/>
</dbReference>
<dbReference type="SMR" id="B6IZ24"/>
<dbReference type="KEGG" id="cbg:CbuG_0533"/>
<dbReference type="HOGENOM" id="CLU_019240_0_0_6"/>
<dbReference type="GO" id="GO:0050566">
    <property type="term" value="F:asparaginyl-tRNA synthase (glutamine-hydrolyzing) activity"/>
    <property type="evidence" value="ECO:0007669"/>
    <property type="project" value="RHEA"/>
</dbReference>
<dbReference type="GO" id="GO:0005524">
    <property type="term" value="F:ATP binding"/>
    <property type="evidence" value="ECO:0007669"/>
    <property type="project" value="UniProtKB-KW"/>
</dbReference>
<dbReference type="GO" id="GO:0050567">
    <property type="term" value="F:glutaminyl-tRNA synthase (glutamine-hydrolyzing) activity"/>
    <property type="evidence" value="ECO:0007669"/>
    <property type="project" value="UniProtKB-UniRule"/>
</dbReference>
<dbReference type="GO" id="GO:0070681">
    <property type="term" value="P:glutaminyl-tRNAGln biosynthesis via transamidation"/>
    <property type="evidence" value="ECO:0007669"/>
    <property type="project" value="TreeGrafter"/>
</dbReference>
<dbReference type="GO" id="GO:0006412">
    <property type="term" value="P:translation"/>
    <property type="evidence" value="ECO:0007669"/>
    <property type="project" value="UniProtKB-UniRule"/>
</dbReference>
<dbReference type="FunFam" id="1.10.10.410:FF:000001">
    <property type="entry name" value="Aspartyl/glutamyl-tRNA(Asn/Gln) amidotransferase subunit B"/>
    <property type="match status" value="1"/>
</dbReference>
<dbReference type="FunFam" id="1.10.150.380:FF:000001">
    <property type="entry name" value="Aspartyl/glutamyl-tRNA(Asn/Gln) amidotransferase subunit B"/>
    <property type="match status" value="1"/>
</dbReference>
<dbReference type="Gene3D" id="1.10.10.410">
    <property type="match status" value="1"/>
</dbReference>
<dbReference type="Gene3D" id="1.10.150.380">
    <property type="entry name" value="GatB domain, N-terminal subdomain"/>
    <property type="match status" value="1"/>
</dbReference>
<dbReference type="HAMAP" id="MF_00121">
    <property type="entry name" value="GatB"/>
    <property type="match status" value="1"/>
</dbReference>
<dbReference type="InterPro" id="IPR017959">
    <property type="entry name" value="Asn/Gln-tRNA_amidoTrfase_suB/E"/>
</dbReference>
<dbReference type="InterPro" id="IPR006075">
    <property type="entry name" value="Asn/Gln-tRNA_Trfase_suB/E_cat"/>
</dbReference>
<dbReference type="InterPro" id="IPR018027">
    <property type="entry name" value="Asn/Gln_amidotransferase"/>
</dbReference>
<dbReference type="InterPro" id="IPR003789">
    <property type="entry name" value="Asn/Gln_tRNA_amidoTrase-B-like"/>
</dbReference>
<dbReference type="InterPro" id="IPR004413">
    <property type="entry name" value="GatB"/>
</dbReference>
<dbReference type="InterPro" id="IPR042114">
    <property type="entry name" value="GatB_C_1"/>
</dbReference>
<dbReference type="InterPro" id="IPR023168">
    <property type="entry name" value="GatB_Yqey_C_2"/>
</dbReference>
<dbReference type="InterPro" id="IPR017958">
    <property type="entry name" value="Gln-tRNA_amidoTrfase_suB_CS"/>
</dbReference>
<dbReference type="InterPro" id="IPR014746">
    <property type="entry name" value="Gln_synth/guanido_kin_cat_dom"/>
</dbReference>
<dbReference type="NCBIfam" id="TIGR00133">
    <property type="entry name" value="gatB"/>
    <property type="match status" value="1"/>
</dbReference>
<dbReference type="NCBIfam" id="NF004012">
    <property type="entry name" value="PRK05477.1-2"/>
    <property type="match status" value="1"/>
</dbReference>
<dbReference type="NCBIfam" id="NF004014">
    <property type="entry name" value="PRK05477.1-4"/>
    <property type="match status" value="1"/>
</dbReference>
<dbReference type="NCBIfam" id="NF004015">
    <property type="entry name" value="PRK05477.1-5"/>
    <property type="match status" value="1"/>
</dbReference>
<dbReference type="PANTHER" id="PTHR11659">
    <property type="entry name" value="GLUTAMYL-TRNA GLN AMIDOTRANSFERASE SUBUNIT B MITOCHONDRIAL AND PROKARYOTIC PET112-RELATED"/>
    <property type="match status" value="1"/>
</dbReference>
<dbReference type="PANTHER" id="PTHR11659:SF0">
    <property type="entry name" value="GLUTAMYL-TRNA(GLN) AMIDOTRANSFERASE SUBUNIT B, MITOCHONDRIAL"/>
    <property type="match status" value="1"/>
</dbReference>
<dbReference type="Pfam" id="PF02934">
    <property type="entry name" value="GatB_N"/>
    <property type="match status" value="1"/>
</dbReference>
<dbReference type="Pfam" id="PF02637">
    <property type="entry name" value="GatB_Yqey"/>
    <property type="match status" value="1"/>
</dbReference>
<dbReference type="SMART" id="SM00845">
    <property type="entry name" value="GatB_Yqey"/>
    <property type="match status" value="1"/>
</dbReference>
<dbReference type="SUPFAM" id="SSF89095">
    <property type="entry name" value="GatB/YqeY motif"/>
    <property type="match status" value="1"/>
</dbReference>
<dbReference type="SUPFAM" id="SSF55931">
    <property type="entry name" value="Glutamine synthetase/guanido kinase"/>
    <property type="match status" value="1"/>
</dbReference>
<dbReference type="PROSITE" id="PS01234">
    <property type="entry name" value="GATB"/>
    <property type="match status" value="1"/>
</dbReference>
<reference key="1">
    <citation type="journal article" date="2009" name="Infect. Immun.">
        <title>Comparative genomics reveal extensive transposon-mediated genomic plasticity and diversity among potential effector proteins within the genus Coxiella.</title>
        <authorList>
            <person name="Beare P.A."/>
            <person name="Unsworth N."/>
            <person name="Andoh M."/>
            <person name="Voth D.E."/>
            <person name="Omsland A."/>
            <person name="Gilk S.D."/>
            <person name="Williams K.P."/>
            <person name="Sobral B.W."/>
            <person name="Kupko J.J. III"/>
            <person name="Porcella S.F."/>
            <person name="Samuel J.E."/>
            <person name="Heinzen R.A."/>
        </authorList>
    </citation>
    <scope>NUCLEOTIDE SEQUENCE [LARGE SCALE GENOMIC DNA]</scope>
    <source>
        <strain>CbuG_Q212</strain>
    </source>
</reference>
<organism>
    <name type="scientific">Coxiella burnetii (strain CbuG_Q212)</name>
    <name type="common">Coxiella burnetii (strain Q212)</name>
    <dbReference type="NCBI Taxonomy" id="434923"/>
    <lineage>
        <taxon>Bacteria</taxon>
        <taxon>Pseudomonadati</taxon>
        <taxon>Pseudomonadota</taxon>
        <taxon>Gammaproteobacteria</taxon>
        <taxon>Legionellales</taxon>
        <taxon>Coxiellaceae</taxon>
        <taxon>Coxiella</taxon>
    </lineage>
</organism>
<keyword id="KW-0067">ATP-binding</keyword>
<keyword id="KW-0436">Ligase</keyword>
<keyword id="KW-0547">Nucleotide-binding</keyword>
<keyword id="KW-0648">Protein biosynthesis</keyword>